<organism>
    <name type="scientific">Ralstonia pickettii (strain 12J)</name>
    <dbReference type="NCBI Taxonomy" id="402626"/>
    <lineage>
        <taxon>Bacteria</taxon>
        <taxon>Pseudomonadati</taxon>
        <taxon>Pseudomonadota</taxon>
        <taxon>Betaproteobacteria</taxon>
        <taxon>Burkholderiales</taxon>
        <taxon>Burkholderiaceae</taxon>
        <taxon>Ralstonia</taxon>
    </lineage>
</organism>
<name>HLDD_RALPJ</name>
<keyword id="KW-0119">Carbohydrate metabolism</keyword>
<keyword id="KW-0413">Isomerase</keyword>
<keyword id="KW-0521">NADP</keyword>
<proteinExistence type="inferred from homology"/>
<protein>
    <recommendedName>
        <fullName evidence="1">ADP-L-glycero-D-manno-heptose-6-epimerase</fullName>
        <ecNumber evidence="1">5.1.3.20</ecNumber>
    </recommendedName>
    <alternativeName>
        <fullName evidence="1">ADP-L-glycero-beta-D-manno-heptose-6-epimerase</fullName>
        <shortName evidence="1">ADP-glyceromanno-heptose 6-epimerase</shortName>
        <shortName evidence="1">ADP-hep 6-epimerase</shortName>
        <shortName evidence="1">AGME</shortName>
    </alternativeName>
</protein>
<evidence type="ECO:0000255" key="1">
    <source>
        <dbReference type="HAMAP-Rule" id="MF_01601"/>
    </source>
</evidence>
<dbReference type="EC" id="5.1.3.20" evidence="1"/>
<dbReference type="EMBL" id="CP001068">
    <property type="protein sequence ID" value="ACD25936.1"/>
    <property type="molecule type" value="Genomic_DNA"/>
</dbReference>
<dbReference type="SMR" id="B2U894"/>
<dbReference type="STRING" id="402626.Rpic_0785"/>
<dbReference type="KEGG" id="rpi:Rpic_0785"/>
<dbReference type="PATRIC" id="fig|402626.5.peg.1981"/>
<dbReference type="eggNOG" id="COG0451">
    <property type="taxonomic scope" value="Bacteria"/>
</dbReference>
<dbReference type="HOGENOM" id="CLU_007383_1_3_4"/>
<dbReference type="UniPathway" id="UPA00356">
    <property type="reaction ID" value="UER00440"/>
</dbReference>
<dbReference type="GO" id="GO:0008712">
    <property type="term" value="F:ADP-glyceromanno-heptose 6-epimerase activity"/>
    <property type="evidence" value="ECO:0007669"/>
    <property type="project" value="UniProtKB-UniRule"/>
</dbReference>
<dbReference type="GO" id="GO:0050661">
    <property type="term" value="F:NADP binding"/>
    <property type="evidence" value="ECO:0007669"/>
    <property type="project" value="InterPro"/>
</dbReference>
<dbReference type="GO" id="GO:0097171">
    <property type="term" value="P:ADP-L-glycero-beta-D-manno-heptose biosynthetic process"/>
    <property type="evidence" value="ECO:0007669"/>
    <property type="project" value="UniProtKB-UniPathway"/>
</dbReference>
<dbReference type="GO" id="GO:0005975">
    <property type="term" value="P:carbohydrate metabolic process"/>
    <property type="evidence" value="ECO:0007669"/>
    <property type="project" value="UniProtKB-UniRule"/>
</dbReference>
<dbReference type="CDD" id="cd05248">
    <property type="entry name" value="ADP_GME_SDR_e"/>
    <property type="match status" value="1"/>
</dbReference>
<dbReference type="Gene3D" id="3.40.50.720">
    <property type="entry name" value="NAD(P)-binding Rossmann-like Domain"/>
    <property type="match status" value="1"/>
</dbReference>
<dbReference type="Gene3D" id="3.90.25.10">
    <property type="entry name" value="UDP-galactose 4-epimerase, domain 1"/>
    <property type="match status" value="1"/>
</dbReference>
<dbReference type="HAMAP" id="MF_01601">
    <property type="entry name" value="Heptose_epimerase"/>
    <property type="match status" value="1"/>
</dbReference>
<dbReference type="InterPro" id="IPR001509">
    <property type="entry name" value="Epimerase_deHydtase"/>
</dbReference>
<dbReference type="InterPro" id="IPR011912">
    <property type="entry name" value="Heptose_epim"/>
</dbReference>
<dbReference type="InterPro" id="IPR036291">
    <property type="entry name" value="NAD(P)-bd_dom_sf"/>
</dbReference>
<dbReference type="NCBIfam" id="TIGR02197">
    <property type="entry name" value="heptose_epim"/>
    <property type="match status" value="1"/>
</dbReference>
<dbReference type="PANTHER" id="PTHR43103:SF3">
    <property type="entry name" value="ADP-L-GLYCERO-D-MANNO-HEPTOSE-6-EPIMERASE"/>
    <property type="match status" value="1"/>
</dbReference>
<dbReference type="PANTHER" id="PTHR43103">
    <property type="entry name" value="NUCLEOSIDE-DIPHOSPHATE-SUGAR EPIMERASE"/>
    <property type="match status" value="1"/>
</dbReference>
<dbReference type="Pfam" id="PF01370">
    <property type="entry name" value="Epimerase"/>
    <property type="match status" value="1"/>
</dbReference>
<dbReference type="SUPFAM" id="SSF51735">
    <property type="entry name" value="NAD(P)-binding Rossmann-fold domains"/>
    <property type="match status" value="1"/>
</dbReference>
<comment type="function">
    <text evidence="1">Catalyzes the interconversion between ADP-D-glycero-beta-D-manno-heptose and ADP-L-glycero-beta-D-manno-heptose via an epimerization at carbon 6 of the heptose.</text>
</comment>
<comment type="catalytic activity">
    <reaction evidence="1">
        <text>ADP-D-glycero-beta-D-manno-heptose = ADP-L-glycero-beta-D-manno-heptose</text>
        <dbReference type="Rhea" id="RHEA:17577"/>
        <dbReference type="ChEBI" id="CHEBI:59967"/>
        <dbReference type="ChEBI" id="CHEBI:61506"/>
        <dbReference type="EC" id="5.1.3.20"/>
    </reaction>
</comment>
<comment type="cofactor">
    <cofactor evidence="1">
        <name>NADP(+)</name>
        <dbReference type="ChEBI" id="CHEBI:58349"/>
    </cofactor>
    <text evidence="1">Binds 1 NADP(+) per subunit.</text>
</comment>
<comment type="pathway">
    <text evidence="1">Nucleotide-sugar biosynthesis; ADP-L-glycero-beta-D-manno-heptose biosynthesis; ADP-L-glycero-beta-D-manno-heptose from D-glycero-beta-D-manno-heptose 7-phosphate: step 4/4.</text>
</comment>
<comment type="subunit">
    <text evidence="1">Homopentamer.</text>
</comment>
<comment type="domain">
    <text evidence="1">Contains a large N-terminal NADP-binding domain, and a smaller C-terminal substrate-binding domain.</text>
</comment>
<comment type="similarity">
    <text evidence="1">Belongs to the NAD(P)-dependent epimerase/dehydratase family. HldD subfamily.</text>
</comment>
<feature type="chain" id="PRO_1000190407" description="ADP-L-glycero-D-manno-heptose-6-epimerase">
    <location>
        <begin position="1"/>
        <end position="331"/>
    </location>
</feature>
<feature type="active site" description="Proton acceptor" evidence="1">
    <location>
        <position position="139"/>
    </location>
</feature>
<feature type="active site" description="Proton acceptor" evidence="1">
    <location>
        <position position="177"/>
    </location>
</feature>
<feature type="binding site" evidence="1">
    <location>
        <begin position="11"/>
        <end position="12"/>
    </location>
    <ligand>
        <name>NADP(+)</name>
        <dbReference type="ChEBI" id="CHEBI:58349"/>
    </ligand>
</feature>
<feature type="binding site" evidence="1">
    <location>
        <begin position="32"/>
        <end position="33"/>
    </location>
    <ligand>
        <name>NADP(+)</name>
        <dbReference type="ChEBI" id="CHEBI:58349"/>
    </ligand>
</feature>
<feature type="binding site" evidence="1">
    <location>
        <position position="39"/>
    </location>
    <ligand>
        <name>NADP(+)</name>
        <dbReference type="ChEBI" id="CHEBI:58349"/>
    </ligand>
</feature>
<feature type="binding site" evidence="1">
    <location>
        <position position="54"/>
    </location>
    <ligand>
        <name>NADP(+)</name>
        <dbReference type="ChEBI" id="CHEBI:58349"/>
    </ligand>
</feature>
<feature type="binding site" evidence="1">
    <location>
        <begin position="75"/>
        <end position="79"/>
    </location>
    <ligand>
        <name>NADP(+)</name>
        <dbReference type="ChEBI" id="CHEBI:58349"/>
    </ligand>
</feature>
<feature type="binding site" evidence="1">
    <location>
        <position position="92"/>
    </location>
    <ligand>
        <name>NADP(+)</name>
        <dbReference type="ChEBI" id="CHEBI:58349"/>
    </ligand>
</feature>
<feature type="binding site" evidence="1">
    <location>
        <position position="143"/>
    </location>
    <ligand>
        <name>NADP(+)</name>
        <dbReference type="ChEBI" id="CHEBI:58349"/>
    </ligand>
</feature>
<feature type="binding site" evidence="1">
    <location>
        <position position="168"/>
    </location>
    <ligand>
        <name>substrate</name>
    </ligand>
</feature>
<feature type="binding site" evidence="1">
    <location>
        <position position="169"/>
    </location>
    <ligand>
        <name>NADP(+)</name>
        <dbReference type="ChEBI" id="CHEBI:58349"/>
    </ligand>
</feature>
<feature type="binding site" evidence="1">
    <location>
        <position position="177"/>
    </location>
    <ligand>
        <name>NADP(+)</name>
        <dbReference type="ChEBI" id="CHEBI:58349"/>
    </ligand>
</feature>
<feature type="binding site" evidence="1">
    <location>
        <position position="179"/>
    </location>
    <ligand>
        <name>substrate</name>
    </ligand>
</feature>
<feature type="binding site" evidence="1">
    <location>
        <position position="186"/>
    </location>
    <ligand>
        <name>substrate</name>
    </ligand>
</feature>
<feature type="binding site" evidence="1">
    <location>
        <begin position="200"/>
        <end position="203"/>
    </location>
    <ligand>
        <name>substrate</name>
    </ligand>
</feature>
<feature type="binding site" evidence="1">
    <location>
        <position position="213"/>
    </location>
    <ligand>
        <name>substrate</name>
    </ligand>
</feature>
<feature type="binding site" evidence="1">
    <location>
        <position position="292"/>
    </location>
    <ligand>
        <name>substrate</name>
    </ligand>
</feature>
<accession>B2U894</accession>
<sequence length="331" mass="37356">MTIIVTGAAGFIGANIVKGLNERGETDIIAVDNLTRADKFKNIVDCQISDYLDKTDFVERFARGEFGKVRAIFHEGACSDTMETDGRYMMDNNYRYSLAVMRACLDQGVQFLYASSAATYGASETFREEPEFERPLNVYGYSKLLFDQVVRRVMLTALSQIVGFRYFNVYGPREQHKGRMASVAFHNFNQFRSEGTVKLFGEYNGYPQGGQMRDFVSVEDVVKVNLFFFDNPDKSGIFNLGTGRAQPFNDIATTVMNTLRGAEGKPALSTEELAQEGLIEYVKFPDALRGKYQCFTQADQSRLRAAGYTAPFLTVQEGVERYCQWLLKQPV</sequence>
<gene>
    <name evidence="1" type="primary">hldD</name>
    <name type="ordered locus">Rpic_0785</name>
</gene>
<reference key="1">
    <citation type="submission" date="2008-05" db="EMBL/GenBank/DDBJ databases">
        <title>Complete sequence of chromosome 1 of Ralstonia pickettii 12J.</title>
        <authorList>
            <person name="Lucas S."/>
            <person name="Copeland A."/>
            <person name="Lapidus A."/>
            <person name="Glavina del Rio T."/>
            <person name="Dalin E."/>
            <person name="Tice H."/>
            <person name="Bruce D."/>
            <person name="Goodwin L."/>
            <person name="Pitluck S."/>
            <person name="Meincke L."/>
            <person name="Brettin T."/>
            <person name="Detter J.C."/>
            <person name="Han C."/>
            <person name="Kuske C.R."/>
            <person name="Schmutz J."/>
            <person name="Larimer F."/>
            <person name="Land M."/>
            <person name="Hauser L."/>
            <person name="Kyrpides N."/>
            <person name="Mikhailova N."/>
            <person name="Marsh T."/>
            <person name="Richardson P."/>
        </authorList>
    </citation>
    <scope>NUCLEOTIDE SEQUENCE [LARGE SCALE GENOMIC DNA]</scope>
    <source>
        <strain>12J</strain>
    </source>
</reference>